<evidence type="ECO:0000255" key="1">
    <source>
        <dbReference type="HAMAP-Rule" id="MF_01077"/>
    </source>
</evidence>
<organism>
    <name type="scientific">Salmonella schwarzengrund (strain CVM19633)</name>
    <dbReference type="NCBI Taxonomy" id="439843"/>
    <lineage>
        <taxon>Bacteria</taxon>
        <taxon>Pseudomonadati</taxon>
        <taxon>Pseudomonadota</taxon>
        <taxon>Gammaproteobacteria</taxon>
        <taxon>Enterobacterales</taxon>
        <taxon>Enterobacteriaceae</taxon>
        <taxon>Salmonella</taxon>
    </lineage>
</organism>
<keyword id="KW-0963">Cytoplasm</keyword>
<keyword id="KW-0690">Ribosome biogenesis</keyword>
<proteinExistence type="inferred from homology"/>
<accession>B4TWE0</accession>
<protein>
    <recommendedName>
        <fullName evidence="1">Ribosome maturation factor RimP</fullName>
    </recommendedName>
</protein>
<dbReference type="EMBL" id="CP001127">
    <property type="protein sequence ID" value="ACF90367.1"/>
    <property type="molecule type" value="Genomic_DNA"/>
</dbReference>
<dbReference type="RefSeq" id="WP_000105461.1">
    <property type="nucleotide sequence ID" value="NC_011094.1"/>
</dbReference>
<dbReference type="SMR" id="B4TWE0"/>
<dbReference type="KEGG" id="sew:SeSA_A3478"/>
<dbReference type="HOGENOM" id="CLU_070525_1_1_6"/>
<dbReference type="Proteomes" id="UP000001865">
    <property type="component" value="Chromosome"/>
</dbReference>
<dbReference type="GO" id="GO:0005829">
    <property type="term" value="C:cytosol"/>
    <property type="evidence" value="ECO:0007669"/>
    <property type="project" value="TreeGrafter"/>
</dbReference>
<dbReference type="GO" id="GO:0000028">
    <property type="term" value="P:ribosomal small subunit assembly"/>
    <property type="evidence" value="ECO:0007669"/>
    <property type="project" value="TreeGrafter"/>
</dbReference>
<dbReference type="GO" id="GO:0006412">
    <property type="term" value="P:translation"/>
    <property type="evidence" value="ECO:0007669"/>
    <property type="project" value="TreeGrafter"/>
</dbReference>
<dbReference type="CDD" id="cd01734">
    <property type="entry name" value="YlxS_C"/>
    <property type="match status" value="1"/>
</dbReference>
<dbReference type="FunFam" id="2.30.30.180:FF:000001">
    <property type="entry name" value="Ribosome maturation factor RimP"/>
    <property type="match status" value="1"/>
</dbReference>
<dbReference type="FunFam" id="3.30.300.70:FF:000001">
    <property type="entry name" value="Ribosome maturation factor RimP"/>
    <property type="match status" value="1"/>
</dbReference>
<dbReference type="Gene3D" id="2.30.30.180">
    <property type="entry name" value="Ribosome maturation factor RimP, C-terminal domain"/>
    <property type="match status" value="1"/>
</dbReference>
<dbReference type="Gene3D" id="3.30.300.70">
    <property type="entry name" value="RimP-like superfamily, N-terminal"/>
    <property type="match status" value="1"/>
</dbReference>
<dbReference type="HAMAP" id="MF_01077">
    <property type="entry name" value="RimP"/>
    <property type="match status" value="1"/>
</dbReference>
<dbReference type="InterPro" id="IPR003728">
    <property type="entry name" value="Ribosome_maturation_RimP"/>
</dbReference>
<dbReference type="InterPro" id="IPR028998">
    <property type="entry name" value="RimP_C"/>
</dbReference>
<dbReference type="InterPro" id="IPR036847">
    <property type="entry name" value="RimP_C_sf"/>
</dbReference>
<dbReference type="InterPro" id="IPR028989">
    <property type="entry name" value="RimP_N"/>
</dbReference>
<dbReference type="InterPro" id="IPR035956">
    <property type="entry name" value="RimP_N_sf"/>
</dbReference>
<dbReference type="NCBIfam" id="NF000927">
    <property type="entry name" value="PRK00092.1-1"/>
    <property type="match status" value="1"/>
</dbReference>
<dbReference type="PANTHER" id="PTHR33867">
    <property type="entry name" value="RIBOSOME MATURATION FACTOR RIMP"/>
    <property type="match status" value="1"/>
</dbReference>
<dbReference type="PANTHER" id="PTHR33867:SF1">
    <property type="entry name" value="RIBOSOME MATURATION FACTOR RIMP"/>
    <property type="match status" value="1"/>
</dbReference>
<dbReference type="Pfam" id="PF17384">
    <property type="entry name" value="DUF150_C"/>
    <property type="match status" value="1"/>
</dbReference>
<dbReference type="Pfam" id="PF02576">
    <property type="entry name" value="RimP_N"/>
    <property type="match status" value="1"/>
</dbReference>
<dbReference type="SUPFAM" id="SSF74942">
    <property type="entry name" value="YhbC-like, C-terminal domain"/>
    <property type="match status" value="1"/>
</dbReference>
<dbReference type="SUPFAM" id="SSF75420">
    <property type="entry name" value="YhbC-like, N-terminal domain"/>
    <property type="match status" value="1"/>
</dbReference>
<gene>
    <name evidence="1" type="primary">rimP</name>
    <name type="ordered locus">SeSA_A3478</name>
</gene>
<comment type="function">
    <text evidence="1">Required for maturation of 30S ribosomal subunits.</text>
</comment>
<comment type="subcellular location">
    <subcellularLocation>
        <location evidence="1">Cytoplasm</location>
    </subcellularLocation>
</comment>
<comment type="similarity">
    <text evidence="1">Belongs to the RimP family.</text>
</comment>
<sequence>MSTLEQKLTEMITAPVEALGYELVGIEFIRGRTSTLRIYIDSEDGINVDDCADVSHQVSAVLDVEDPISVAYNLEVSSPGLDRPMFTADHYARFQGEEVALVLRMAVQNRRKWQGIIKAVDGEMITVTVEGKDEVFALSNIQKANLVPHF</sequence>
<feature type="chain" id="PRO_0000384767" description="Ribosome maturation factor RimP">
    <location>
        <begin position="1"/>
        <end position="150"/>
    </location>
</feature>
<reference key="1">
    <citation type="journal article" date="2011" name="J. Bacteriol.">
        <title>Comparative genomics of 28 Salmonella enterica isolates: evidence for CRISPR-mediated adaptive sublineage evolution.</title>
        <authorList>
            <person name="Fricke W.F."/>
            <person name="Mammel M.K."/>
            <person name="McDermott P.F."/>
            <person name="Tartera C."/>
            <person name="White D.G."/>
            <person name="Leclerc J.E."/>
            <person name="Ravel J."/>
            <person name="Cebula T.A."/>
        </authorList>
    </citation>
    <scope>NUCLEOTIDE SEQUENCE [LARGE SCALE GENOMIC DNA]</scope>
    <source>
        <strain>CVM19633</strain>
    </source>
</reference>
<name>RIMP_SALSV</name>